<evidence type="ECO:0000255" key="1">
    <source>
        <dbReference type="HAMAP-Rule" id="MF_00445"/>
    </source>
</evidence>
<comment type="function">
    <text evidence="1">NDH shuttles electrons from NAD(P)H:plastoquinone, via FMN and iron-sulfur (Fe-S) centers, to quinones in the photosynthetic chain and possibly in a chloroplast respiratory chain. The immediate electron acceptor for the enzyme in this species is believed to be plastoquinone. Couples the redox reaction to proton translocation, and thus conserves the redox energy in a proton gradient.</text>
</comment>
<comment type="catalytic activity">
    <reaction evidence="1">
        <text>a plastoquinone + NADH + (n+1) H(+)(in) = a plastoquinol + NAD(+) + n H(+)(out)</text>
        <dbReference type="Rhea" id="RHEA:42608"/>
        <dbReference type="Rhea" id="RHEA-COMP:9561"/>
        <dbReference type="Rhea" id="RHEA-COMP:9562"/>
        <dbReference type="ChEBI" id="CHEBI:15378"/>
        <dbReference type="ChEBI" id="CHEBI:17757"/>
        <dbReference type="ChEBI" id="CHEBI:57540"/>
        <dbReference type="ChEBI" id="CHEBI:57945"/>
        <dbReference type="ChEBI" id="CHEBI:62192"/>
    </reaction>
</comment>
<comment type="catalytic activity">
    <reaction evidence="1">
        <text>a plastoquinone + NADPH + (n+1) H(+)(in) = a plastoquinol + NADP(+) + n H(+)(out)</text>
        <dbReference type="Rhea" id="RHEA:42612"/>
        <dbReference type="Rhea" id="RHEA-COMP:9561"/>
        <dbReference type="Rhea" id="RHEA-COMP:9562"/>
        <dbReference type="ChEBI" id="CHEBI:15378"/>
        <dbReference type="ChEBI" id="CHEBI:17757"/>
        <dbReference type="ChEBI" id="CHEBI:57783"/>
        <dbReference type="ChEBI" id="CHEBI:58349"/>
        <dbReference type="ChEBI" id="CHEBI:62192"/>
    </reaction>
</comment>
<comment type="subunit">
    <text evidence="1">NDH is composed of at least 16 different subunits, 5 of which are encoded in the nucleus.</text>
</comment>
<comment type="subcellular location">
    <subcellularLocation>
        <location evidence="1">Plastid</location>
        <location evidence="1">Chloroplast thylakoid membrane</location>
        <topology evidence="1">Multi-pass membrane protein</topology>
    </subcellularLocation>
</comment>
<comment type="similarity">
    <text evidence="1">Belongs to the complex I subunit 2 family.</text>
</comment>
<sequence length="510" mass="56587">MIWHVQNENFILDSTRIFMKAFHLLLFDGSFIFPECILIFGLILLLMIDSTSDQKDIPWLYFISSTSLVMSITALLFRWREEPMISFSGNFQTNNFNEIFQFLILLCSTLCIPLSVEYIECTEMAITEFLLFVLTATLGGMFLCGANDLITIFVAPECFSLCSYLLSGYTKKDVRSNEATTKYLLMGGASSSILVHGFSWLYGSSGGEIELQEIVNGLLNTQMYNSPGISIALIFITVGIGFKLSPAPSHQWTPDVYEGSPTPVVAFLSVTSKVAASASATRIFDIPFYFSSNEWHLLLEILAILSMILGNLIAITQTSMKRMLAYSSIGQIGYVIIGIIVGDSNGGYASMITYMLFYIAMNLGTFARIVSFGLRTGTDNIRDYAGLYTKDPLLALSLALCLLSLGGLPPLAGFFGKLHLFWCGWQAGLYFLVSIGLLTSVVSIYYYLKIIKLLMTGRNQEITPHVRNYRRSPLRSNNSIELSMIVCVIASTIPGISMNPIIEIAQDTLF</sequence>
<reference key="1">
    <citation type="journal article" date="2006" name="Plant Cell Rep.">
        <title>Complete sequence and organization of the cucumber (Cucumis sativus L. cv. Baekmibaekdadagi) chloroplast genome.</title>
        <authorList>
            <person name="Kim J.-S."/>
            <person name="Jung J.D."/>
            <person name="Lee J.-A."/>
            <person name="Park H.-W."/>
            <person name="Oh K.-H."/>
            <person name="Jeong W.J."/>
            <person name="Choi D.-W."/>
            <person name="Liu J.R."/>
            <person name="Cho K.Y."/>
        </authorList>
    </citation>
    <scope>NUCLEOTIDE SEQUENCE [LARGE SCALE GENOMIC DNA]</scope>
    <source>
        <strain>cv. Baekmibaekdadagi</strain>
    </source>
</reference>
<reference key="2">
    <citation type="journal article" date="2007" name="Cell. Mol. Biol. Lett.">
        <title>The complete structure of the cucumber (Cucumis sativus L.) chloroplast genome: its composition and comparative analysis.</title>
        <authorList>
            <person name="Plader W.W."/>
            <person name="Yukawa Y."/>
            <person name="Sugiura M."/>
            <person name="Malepszy S."/>
        </authorList>
    </citation>
    <scope>NUCLEOTIDE SEQUENCE [LARGE SCALE GENOMIC DNA]</scope>
    <source>
        <strain>cv. Borszczagowski</strain>
    </source>
</reference>
<reference key="3">
    <citation type="journal article" date="2007" name="Genome">
        <title>Sequencing cucumber (Cucumis sativus L.) chloroplast genomes identifies differences between chilling-tolerant and -susceptible cucumber lines.</title>
        <authorList>
            <person name="Chung S.-M."/>
            <person name="Gordon V.S."/>
            <person name="Staub J.E."/>
        </authorList>
    </citation>
    <scope>NUCLEOTIDE SEQUENCE [LARGE SCALE GENOMIC DNA]</scope>
    <source>
        <strain>cv. Chipper</strain>
        <strain>cv. Gy14</strain>
    </source>
</reference>
<proteinExistence type="inferred from homology"/>
<feature type="chain" id="PRO_0000391263" description="NAD(P)H-quinone oxidoreductase subunit 2 B, chloroplastic">
    <location>
        <begin position="1"/>
        <end position="510"/>
    </location>
</feature>
<feature type="transmembrane region" description="Helical" evidence="1">
    <location>
        <begin position="24"/>
        <end position="44"/>
    </location>
</feature>
<feature type="transmembrane region" description="Helical" evidence="1">
    <location>
        <begin position="57"/>
        <end position="77"/>
    </location>
</feature>
<feature type="transmembrane region" description="Helical" evidence="1">
    <location>
        <begin position="99"/>
        <end position="119"/>
    </location>
</feature>
<feature type="transmembrane region" description="Helical" evidence="1">
    <location>
        <begin position="124"/>
        <end position="144"/>
    </location>
</feature>
<feature type="transmembrane region" description="Helical" evidence="1">
    <location>
        <begin position="149"/>
        <end position="169"/>
    </location>
</feature>
<feature type="transmembrane region" description="Helical" evidence="1">
    <location>
        <begin position="183"/>
        <end position="203"/>
    </location>
</feature>
<feature type="transmembrane region" description="Helical" evidence="1">
    <location>
        <begin position="227"/>
        <end position="247"/>
    </location>
</feature>
<feature type="transmembrane region" description="Helical" evidence="1">
    <location>
        <begin position="295"/>
        <end position="315"/>
    </location>
</feature>
<feature type="transmembrane region" description="Helical" evidence="1">
    <location>
        <begin position="323"/>
        <end position="343"/>
    </location>
</feature>
<feature type="transmembrane region" description="Helical" evidence="1">
    <location>
        <begin position="347"/>
        <end position="367"/>
    </location>
</feature>
<feature type="transmembrane region" description="Helical" evidence="1">
    <location>
        <begin position="395"/>
        <end position="415"/>
    </location>
</feature>
<feature type="transmembrane region" description="Helical" evidence="1">
    <location>
        <begin position="418"/>
        <end position="438"/>
    </location>
</feature>
<feature type="transmembrane region" description="Helical" evidence="1">
    <location>
        <begin position="482"/>
        <end position="502"/>
    </location>
</feature>
<accession>P0CC51</accession>
<accession>A5J1X9</accession>
<accession>Q4VZK8</accession>
<dbReference type="EC" id="7.1.1.-" evidence="1"/>
<dbReference type="EMBL" id="DQ119058">
    <property type="protein sequence ID" value="AAZ94711.1"/>
    <property type="molecule type" value="Genomic_DNA"/>
</dbReference>
<dbReference type="EMBL" id="AJ970307">
    <property type="protein sequence ID" value="CAJ00819.1"/>
    <property type="molecule type" value="Genomic_DNA"/>
</dbReference>
<dbReference type="EMBL" id="DQ865975">
    <property type="protein sequence ID" value="ABI97479.1"/>
    <property type="molecule type" value="Genomic_DNA"/>
</dbReference>
<dbReference type="EMBL" id="DQ865976">
    <property type="protein sequence ID" value="ABI98805.1"/>
    <property type="molecule type" value="Genomic_DNA"/>
</dbReference>
<dbReference type="SMR" id="P0CC51"/>
<dbReference type="KEGG" id="csv:3429253"/>
<dbReference type="KEGG" id="csv:3429254"/>
<dbReference type="OrthoDB" id="1876953at2759"/>
<dbReference type="GO" id="GO:0009535">
    <property type="term" value="C:chloroplast thylakoid membrane"/>
    <property type="evidence" value="ECO:0007669"/>
    <property type="project" value="UniProtKB-SubCell"/>
</dbReference>
<dbReference type="GO" id="GO:0008137">
    <property type="term" value="F:NADH dehydrogenase (ubiquinone) activity"/>
    <property type="evidence" value="ECO:0007669"/>
    <property type="project" value="InterPro"/>
</dbReference>
<dbReference type="GO" id="GO:0048038">
    <property type="term" value="F:quinone binding"/>
    <property type="evidence" value="ECO:0007669"/>
    <property type="project" value="UniProtKB-KW"/>
</dbReference>
<dbReference type="GO" id="GO:0042773">
    <property type="term" value="P:ATP synthesis coupled electron transport"/>
    <property type="evidence" value="ECO:0007669"/>
    <property type="project" value="InterPro"/>
</dbReference>
<dbReference type="GO" id="GO:0019684">
    <property type="term" value="P:photosynthesis, light reaction"/>
    <property type="evidence" value="ECO:0007669"/>
    <property type="project" value="UniProtKB-UniRule"/>
</dbReference>
<dbReference type="HAMAP" id="MF_00445">
    <property type="entry name" value="NDH1_NuoN_1"/>
    <property type="match status" value="1"/>
</dbReference>
<dbReference type="InterPro" id="IPR010096">
    <property type="entry name" value="NADH-Q_OxRdtase_suN/2"/>
</dbReference>
<dbReference type="InterPro" id="IPR001750">
    <property type="entry name" value="ND/Mrp_TM"/>
</dbReference>
<dbReference type="InterPro" id="IPR045693">
    <property type="entry name" value="Ndh2_N"/>
</dbReference>
<dbReference type="NCBIfam" id="TIGR01770">
    <property type="entry name" value="NDH_I_N"/>
    <property type="match status" value="1"/>
</dbReference>
<dbReference type="NCBIfam" id="NF002701">
    <property type="entry name" value="PRK02504.1"/>
    <property type="match status" value="1"/>
</dbReference>
<dbReference type="PANTHER" id="PTHR22773">
    <property type="entry name" value="NADH DEHYDROGENASE"/>
    <property type="match status" value="1"/>
</dbReference>
<dbReference type="Pfam" id="PF19530">
    <property type="entry name" value="Ndh2_N"/>
    <property type="match status" value="1"/>
</dbReference>
<dbReference type="Pfam" id="PF00361">
    <property type="entry name" value="Proton_antipo_M"/>
    <property type="match status" value="1"/>
</dbReference>
<dbReference type="PRINTS" id="PR01434">
    <property type="entry name" value="NADHDHGNASE5"/>
</dbReference>
<gene>
    <name evidence="1" type="primary">ndhB2</name>
    <name type="synonym">ndhB-B</name>
    <name type="ordered locus">CsCp125</name>
</gene>
<protein>
    <recommendedName>
        <fullName evidence="1">NAD(P)H-quinone oxidoreductase subunit 2 B, chloroplastic</fullName>
        <ecNumber evidence="1">7.1.1.-</ecNumber>
    </recommendedName>
    <alternativeName>
        <fullName evidence="1">NAD(P)H dehydrogenase, subunit 2 B</fullName>
    </alternativeName>
    <alternativeName>
        <fullName evidence="1">NADH-plastoquinone oxidoreductase subunit 2 B</fullName>
    </alternativeName>
</protein>
<keyword id="KW-0150">Chloroplast</keyword>
<keyword id="KW-0472">Membrane</keyword>
<keyword id="KW-0520">NAD</keyword>
<keyword id="KW-0521">NADP</keyword>
<keyword id="KW-0934">Plastid</keyword>
<keyword id="KW-0618">Plastoquinone</keyword>
<keyword id="KW-0874">Quinone</keyword>
<keyword id="KW-0793">Thylakoid</keyword>
<keyword id="KW-1278">Translocase</keyword>
<keyword id="KW-0812">Transmembrane</keyword>
<keyword id="KW-1133">Transmembrane helix</keyword>
<keyword id="KW-0813">Transport</keyword>
<name>NU2C2_CUCSA</name>
<organism>
    <name type="scientific">Cucumis sativus</name>
    <name type="common">Cucumber</name>
    <dbReference type="NCBI Taxonomy" id="3659"/>
    <lineage>
        <taxon>Eukaryota</taxon>
        <taxon>Viridiplantae</taxon>
        <taxon>Streptophyta</taxon>
        <taxon>Embryophyta</taxon>
        <taxon>Tracheophyta</taxon>
        <taxon>Spermatophyta</taxon>
        <taxon>Magnoliopsida</taxon>
        <taxon>eudicotyledons</taxon>
        <taxon>Gunneridae</taxon>
        <taxon>Pentapetalae</taxon>
        <taxon>rosids</taxon>
        <taxon>fabids</taxon>
        <taxon>Cucurbitales</taxon>
        <taxon>Cucurbitaceae</taxon>
        <taxon>Benincaseae</taxon>
        <taxon>Cucumis</taxon>
    </lineage>
</organism>
<geneLocation type="chloroplast"/>